<sequence>MKPLKIIFAGTPDFAAQHLQALLNSHHQVIAVYTQPDKPAGRGKKLQASPVKQLAEQYNIPVYQPKSLRKEEAQAQFAQLQADVMVVVAYGLILPKAVLEMPRLGCLNVHGSILPRWRGAAPIQRAIWAGDKQTGVTIMQMDEGLDTGDMLHKVYCDITAEETSASLYHKLATLAPPALIDVLDELESGKFIAEKQEDSKSNYAEKLSKEEAKLDWSLSAAQLERNIRAFNPAPVAFLTVPVNEAEERIKVYRAEVLPHQNSAAGTVLAFDKKGLRIATAEGVLNIQQLQPSGKKPMSVQDFLNGRADWFVLGQVLN</sequence>
<gene>
    <name evidence="1" type="primary">fmt</name>
    <name type="ordered locus">MS2202</name>
</gene>
<protein>
    <recommendedName>
        <fullName evidence="1">Methionyl-tRNA formyltransferase</fullName>
        <ecNumber evidence="1">2.1.2.9</ecNumber>
    </recommendedName>
</protein>
<proteinExistence type="inferred from homology"/>
<keyword id="KW-0648">Protein biosynthesis</keyword>
<keyword id="KW-0808">Transferase</keyword>
<dbReference type="EC" id="2.1.2.9" evidence="1"/>
<dbReference type="EMBL" id="AE016827">
    <property type="protein sequence ID" value="AAU38809.1"/>
    <property type="status" value="ALT_INIT"/>
    <property type="molecule type" value="Genomic_DNA"/>
</dbReference>
<dbReference type="RefSeq" id="WP_041640080.1">
    <property type="nucleotide sequence ID" value="NC_006300.1"/>
</dbReference>
<dbReference type="SMR" id="Q65QF1"/>
<dbReference type="STRING" id="221988.MS2202"/>
<dbReference type="KEGG" id="msu:MS2202"/>
<dbReference type="eggNOG" id="COG0223">
    <property type="taxonomic scope" value="Bacteria"/>
</dbReference>
<dbReference type="HOGENOM" id="CLU_033347_1_2_6"/>
<dbReference type="OrthoDB" id="9802815at2"/>
<dbReference type="Proteomes" id="UP000000607">
    <property type="component" value="Chromosome"/>
</dbReference>
<dbReference type="GO" id="GO:0005829">
    <property type="term" value="C:cytosol"/>
    <property type="evidence" value="ECO:0007669"/>
    <property type="project" value="TreeGrafter"/>
</dbReference>
<dbReference type="GO" id="GO:0004479">
    <property type="term" value="F:methionyl-tRNA formyltransferase activity"/>
    <property type="evidence" value="ECO:0007669"/>
    <property type="project" value="UniProtKB-UniRule"/>
</dbReference>
<dbReference type="CDD" id="cd08646">
    <property type="entry name" value="FMT_core_Met-tRNA-FMT_N"/>
    <property type="match status" value="1"/>
</dbReference>
<dbReference type="CDD" id="cd08704">
    <property type="entry name" value="Met_tRNA_FMT_C"/>
    <property type="match status" value="1"/>
</dbReference>
<dbReference type="FunFam" id="3.40.50.170:FF:000003">
    <property type="entry name" value="Methionyl-tRNA formyltransferase"/>
    <property type="match status" value="1"/>
</dbReference>
<dbReference type="Gene3D" id="3.10.25.10">
    <property type="entry name" value="Formyl transferase, C-terminal domain"/>
    <property type="match status" value="1"/>
</dbReference>
<dbReference type="Gene3D" id="3.40.50.170">
    <property type="entry name" value="Formyl transferase, N-terminal domain"/>
    <property type="match status" value="1"/>
</dbReference>
<dbReference type="HAMAP" id="MF_00182">
    <property type="entry name" value="Formyl_trans"/>
    <property type="match status" value="1"/>
</dbReference>
<dbReference type="InterPro" id="IPR005794">
    <property type="entry name" value="Fmt"/>
</dbReference>
<dbReference type="InterPro" id="IPR005793">
    <property type="entry name" value="Formyl_trans_C"/>
</dbReference>
<dbReference type="InterPro" id="IPR037022">
    <property type="entry name" value="Formyl_trans_C_sf"/>
</dbReference>
<dbReference type="InterPro" id="IPR002376">
    <property type="entry name" value="Formyl_transf_N"/>
</dbReference>
<dbReference type="InterPro" id="IPR036477">
    <property type="entry name" value="Formyl_transf_N_sf"/>
</dbReference>
<dbReference type="InterPro" id="IPR011034">
    <property type="entry name" value="Formyl_transferase-like_C_sf"/>
</dbReference>
<dbReference type="InterPro" id="IPR001555">
    <property type="entry name" value="GART_AS"/>
</dbReference>
<dbReference type="InterPro" id="IPR044135">
    <property type="entry name" value="Met-tRNA-FMT_C"/>
</dbReference>
<dbReference type="InterPro" id="IPR041711">
    <property type="entry name" value="Met-tRNA-FMT_N"/>
</dbReference>
<dbReference type="NCBIfam" id="TIGR00460">
    <property type="entry name" value="fmt"/>
    <property type="match status" value="1"/>
</dbReference>
<dbReference type="PANTHER" id="PTHR11138">
    <property type="entry name" value="METHIONYL-TRNA FORMYLTRANSFERASE"/>
    <property type="match status" value="1"/>
</dbReference>
<dbReference type="PANTHER" id="PTHR11138:SF5">
    <property type="entry name" value="METHIONYL-TRNA FORMYLTRANSFERASE, MITOCHONDRIAL"/>
    <property type="match status" value="1"/>
</dbReference>
<dbReference type="Pfam" id="PF02911">
    <property type="entry name" value="Formyl_trans_C"/>
    <property type="match status" value="1"/>
</dbReference>
<dbReference type="Pfam" id="PF00551">
    <property type="entry name" value="Formyl_trans_N"/>
    <property type="match status" value="1"/>
</dbReference>
<dbReference type="SUPFAM" id="SSF50486">
    <property type="entry name" value="FMT C-terminal domain-like"/>
    <property type="match status" value="1"/>
</dbReference>
<dbReference type="SUPFAM" id="SSF53328">
    <property type="entry name" value="Formyltransferase"/>
    <property type="match status" value="1"/>
</dbReference>
<dbReference type="PROSITE" id="PS00373">
    <property type="entry name" value="GART"/>
    <property type="match status" value="1"/>
</dbReference>
<name>FMT_MANSM</name>
<feature type="chain" id="PRO_0000082990" description="Methionyl-tRNA formyltransferase">
    <location>
        <begin position="1"/>
        <end position="317"/>
    </location>
</feature>
<feature type="binding site" evidence="1">
    <location>
        <begin position="112"/>
        <end position="115"/>
    </location>
    <ligand>
        <name>(6S)-5,6,7,8-tetrahydrofolate</name>
        <dbReference type="ChEBI" id="CHEBI:57453"/>
    </ligand>
</feature>
<evidence type="ECO:0000255" key="1">
    <source>
        <dbReference type="HAMAP-Rule" id="MF_00182"/>
    </source>
</evidence>
<evidence type="ECO:0000305" key="2"/>
<accession>Q65QF1</accession>
<organism>
    <name type="scientific">Mannheimia succiniciproducens (strain KCTC 0769BP / MBEL55E)</name>
    <dbReference type="NCBI Taxonomy" id="221988"/>
    <lineage>
        <taxon>Bacteria</taxon>
        <taxon>Pseudomonadati</taxon>
        <taxon>Pseudomonadota</taxon>
        <taxon>Gammaproteobacteria</taxon>
        <taxon>Pasteurellales</taxon>
        <taxon>Pasteurellaceae</taxon>
        <taxon>Basfia</taxon>
    </lineage>
</organism>
<reference key="1">
    <citation type="journal article" date="2004" name="Nat. Biotechnol.">
        <title>The genome sequence of the capnophilic rumen bacterium Mannheimia succiniciproducens.</title>
        <authorList>
            <person name="Hong S.H."/>
            <person name="Kim J.S."/>
            <person name="Lee S.Y."/>
            <person name="In Y.H."/>
            <person name="Choi S.S."/>
            <person name="Rih J.-K."/>
            <person name="Kim C.H."/>
            <person name="Jeong H."/>
            <person name="Hur C.G."/>
            <person name="Kim J.J."/>
        </authorList>
    </citation>
    <scope>NUCLEOTIDE SEQUENCE [LARGE SCALE GENOMIC DNA]</scope>
    <source>
        <strain>KCTC 0769BP / MBEL55E</strain>
    </source>
</reference>
<comment type="function">
    <text evidence="1">Attaches a formyl group to the free amino group of methionyl-tRNA(fMet). The formyl group appears to play a dual role in the initiator identity of N-formylmethionyl-tRNA by promoting its recognition by IF2 and preventing the misappropriation of this tRNA by the elongation apparatus.</text>
</comment>
<comment type="catalytic activity">
    <reaction evidence="1">
        <text>L-methionyl-tRNA(fMet) + (6R)-10-formyltetrahydrofolate = N-formyl-L-methionyl-tRNA(fMet) + (6S)-5,6,7,8-tetrahydrofolate + H(+)</text>
        <dbReference type="Rhea" id="RHEA:24380"/>
        <dbReference type="Rhea" id="RHEA-COMP:9952"/>
        <dbReference type="Rhea" id="RHEA-COMP:9953"/>
        <dbReference type="ChEBI" id="CHEBI:15378"/>
        <dbReference type="ChEBI" id="CHEBI:57453"/>
        <dbReference type="ChEBI" id="CHEBI:78530"/>
        <dbReference type="ChEBI" id="CHEBI:78844"/>
        <dbReference type="ChEBI" id="CHEBI:195366"/>
        <dbReference type="EC" id="2.1.2.9"/>
    </reaction>
</comment>
<comment type="similarity">
    <text evidence="1">Belongs to the Fmt family.</text>
</comment>
<comment type="sequence caution" evidence="2">
    <conflict type="erroneous initiation">
        <sequence resource="EMBL-CDS" id="AAU38809"/>
    </conflict>
</comment>